<keyword id="KW-1185">Reference proteome</keyword>
<keyword id="KW-0687">Ribonucleoprotein</keyword>
<keyword id="KW-0689">Ribosomal protein</keyword>
<sequence>MSITKDQIIEAVASMSVMEVVELITAMEEKFGVSAAAVAAGPAAAAEAVEEQTEFNVMLTAIGANKVAVIKAVRAATSLGLKEAKDLVEAAPTAVKEAVSKDEAEALKKELEAAGASVEIK</sequence>
<evidence type="ECO:0000255" key="1">
    <source>
        <dbReference type="HAMAP-Rule" id="MF_00368"/>
    </source>
</evidence>
<evidence type="ECO:0000305" key="2"/>
<comment type="function">
    <text evidence="1">Forms part of the ribosomal stalk which helps the ribosome interact with GTP-bound translation factors. Is thus essential for accurate translation.</text>
</comment>
<comment type="subunit">
    <text evidence="1">Homodimer. Part of the ribosomal stalk of the 50S ribosomal subunit. Forms a multimeric L10(L12)X complex, where L10 forms an elongated spine to which 2 to 4 L12 dimers bind in a sequential fashion. Binds GTP-bound translation factors.</text>
</comment>
<comment type="similarity">
    <text evidence="1">Belongs to the bacterial ribosomal protein bL12 family.</text>
</comment>
<protein>
    <recommendedName>
        <fullName evidence="1">Large ribosomal subunit protein bL12</fullName>
    </recommendedName>
    <alternativeName>
        <fullName evidence="2">50S ribosomal protein L7/L12</fullName>
    </alternativeName>
</protein>
<name>RL7_TOLAT</name>
<gene>
    <name evidence="1" type="primary">rplL</name>
    <name type="ordered locus">Tola_2784</name>
</gene>
<accession>C4LBV3</accession>
<feature type="chain" id="PRO_1000205571" description="Large ribosomal subunit protein bL12">
    <location>
        <begin position="1"/>
        <end position="121"/>
    </location>
</feature>
<proteinExistence type="inferred from homology"/>
<organism>
    <name type="scientific">Tolumonas auensis (strain DSM 9187 / NBRC 110442 / TA 4)</name>
    <dbReference type="NCBI Taxonomy" id="595494"/>
    <lineage>
        <taxon>Bacteria</taxon>
        <taxon>Pseudomonadati</taxon>
        <taxon>Pseudomonadota</taxon>
        <taxon>Gammaproteobacteria</taxon>
        <taxon>Aeromonadales</taxon>
        <taxon>Aeromonadaceae</taxon>
        <taxon>Tolumonas</taxon>
    </lineage>
</organism>
<reference key="1">
    <citation type="submission" date="2009-05" db="EMBL/GenBank/DDBJ databases">
        <title>Complete sequence of Tolumonas auensis DSM 9187.</title>
        <authorList>
            <consortium name="US DOE Joint Genome Institute"/>
            <person name="Lucas S."/>
            <person name="Copeland A."/>
            <person name="Lapidus A."/>
            <person name="Glavina del Rio T."/>
            <person name="Tice H."/>
            <person name="Bruce D."/>
            <person name="Goodwin L."/>
            <person name="Pitluck S."/>
            <person name="Chertkov O."/>
            <person name="Brettin T."/>
            <person name="Detter J.C."/>
            <person name="Han C."/>
            <person name="Larimer F."/>
            <person name="Land M."/>
            <person name="Hauser L."/>
            <person name="Kyrpides N."/>
            <person name="Mikhailova N."/>
            <person name="Spring S."/>
            <person name="Beller H."/>
        </authorList>
    </citation>
    <scope>NUCLEOTIDE SEQUENCE [LARGE SCALE GENOMIC DNA]</scope>
    <source>
        <strain>DSM 9187 / NBRC 110442 / TA 4</strain>
    </source>
</reference>
<dbReference type="EMBL" id="CP001616">
    <property type="protein sequence ID" value="ACQ94377.1"/>
    <property type="molecule type" value="Genomic_DNA"/>
</dbReference>
<dbReference type="RefSeq" id="WP_015879826.1">
    <property type="nucleotide sequence ID" value="NC_012691.1"/>
</dbReference>
<dbReference type="SMR" id="C4LBV3"/>
<dbReference type="STRING" id="595494.Tola_2784"/>
<dbReference type="KEGG" id="tau:Tola_2784"/>
<dbReference type="eggNOG" id="COG0222">
    <property type="taxonomic scope" value="Bacteria"/>
</dbReference>
<dbReference type="HOGENOM" id="CLU_086499_3_2_6"/>
<dbReference type="OrthoDB" id="9811748at2"/>
<dbReference type="Proteomes" id="UP000009073">
    <property type="component" value="Chromosome"/>
</dbReference>
<dbReference type="GO" id="GO:0022625">
    <property type="term" value="C:cytosolic large ribosomal subunit"/>
    <property type="evidence" value="ECO:0007669"/>
    <property type="project" value="TreeGrafter"/>
</dbReference>
<dbReference type="GO" id="GO:0003729">
    <property type="term" value="F:mRNA binding"/>
    <property type="evidence" value="ECO:0007669"/>
    <property type="project" value="TreeGrafter"/>
</dbReference>
<dbReference type="GO" id="GO:0003735">
    <property type="term" value="F:structural constituent of ribosome"/>
    <property type="evidence" value="ECO:0007669"/>
    <property type="project" value="InterPro"/>
</dbReference>
<dbReference type="GO" id="GO:0006412">
    <property type="term" value="P:translation"/>
    <property type="evidence" value="ECO:0007669"/>
    <property type="project" value="UniProtKB-UniRule"/>
</dbReference>
<dbReference type="CDD" id="cd00387">
    <property type="entry name" value="Ribosomal_L7_L12"/>
    <property type="match status" value="1"/>
</dbReference>
<dbReference type="FunFam" id="3.30.1390.10:FF:000001">
    <property type="entry name" value="50S ribosomal protein L7/L12"/>
    <property type="match status" value="1"/>
</dbReference>
<dbReference type="Gene3D" id="3.30.1390.10">
    <property type="match status" value="1"/>
</dbReference>
<dbReference type="Gene3D" id="1.20.5.710">
    <property type="entry name" value="Single helix bin"/>
    <property type="match status" value="1"/>
</dbReference>
<dbReference type="HAMAP" id="MF_00368">
    <property type="entry name" value="Ribosomal_bL12"/>
    <property type="match status" value="1"/>
</dbReference>
<dbReference type="InterPro" id="IPR000206">
    <property type="entry name" value="Ribosomal_bL12"/>
</dbReference>
<dbReference type="InterPro" id="IPR013823">
    <property type="entry name" value="Ribosomal_bL12_C"/>
</dbReference>
<dbReference type="InterPro" id="IPR014719">
    <property type="entry name" value="Ribosomal_bL12_C/ClpS-like"/>
</dbReference>
<dbReference type="InterPro" id="IPR008932">
    <property type="entry name" value="Ribosomal_bL12_oligo"/>
</dbReference>
<dbReference type="InterPro" id="IPR036235">
    <property type="entry name" value="Ribosomal_bL12_oligo_N_sf"/>
</dbReference>
<dbReference type="NCBIfam" id="TIGR00855">
    <property type="entry name" value="L12"/>
    <property type="match status" value="1"/>
</dbReference>
<dbReference type="PANTHER" id="PTHR45987">
    <property type="entry name" value="39S RIBOSOMAL PROTEIN L12"/>
    <property type="match status" value="1"/>
</dbReference>
<dbReference type="PANTHER" id="PTHR45987:SF4">
    <property type="entry name" value="LARGE RIBOSOMAL SUBUNIT PROTEIN BL12M"/>
    <property type="match status" value="1"/>
</dbReference>
<dbReference type="Pfam" id="PF00542">
    <property type="entry name" value="Ribosomal_L12"/>
    <property type="match status" value="1"/>
</dbReference>
<dbReference type="Pfam" id="PF16320">
    <property type="entry name" value="Ribosomal_L12_N"/>
    <property type="match status" value="1"/>
</dbReference>
<dbReference type="SUPFAM" id="SSF54736">
    <property type="entry name" value="ClpS-like"/>
    <property type="match status" value="1"/>
</dbReference>
<dbReference type="SUPFAM" id="SSF48300">
    <property type="entry name" value="Ribosomal protein L7/12, oligomerisation (N-terminal) domain"/>
    <property type="match status" value="1"/>
</dbReference>